<sequence length="128" mass="13731">MSGRGKTGGKARAKAKTRSSRAGLQFPVGRVHRLLRKGNYAERVGAGAPVYLAAVLEYLTAEILELAGNAARDNKKTRIIPRHLQLAVRNDEELNKLLGGVTIAQGGVLPNIQAVLLPKKTEKAVKAK</sequence>
<comment type="function">
    <text evidence="5">Core component of nucleosome. Nucleosomes wrap and compact DNA into chromatin, limiting DNA accessibility to the cellular machineries which require DNA as a template. Histones thereby play a central role in transcription regulation, DNA repair, DNA replication and chromosomal stability. DNA accessibility is regulated via a complex set of post-translational modifications of histones, also called histone code, and nucleosome remodeling.</text>
</comment>
<comment type="function">
    <text evidence="5">The secreted form has antibacterial activity against Gram-positive bacteria and antifungal activity against S.cerevisiae.</text>
</comment>
<comment type="subunit">
    <text>The nucleosome is a histone octamer containing two molecules each of H2A, H2B, H3 and H4 assembled in one H3-H4 heterotetramer and two H2A-H2B heterodimers. The octamer wraps approximately 147 bp of DNA.</text>
</comment>
<comment type="subcellular location">
    <subcellularLocation>
        <location>Nucleus</location>
    </subcellularLocation>
    <subcellularLocation>
        <location>Chromosome</location>
    </subcellularLocation>
    <text>A secreted form has been detected in skin secretions.</text>
</comment>
<comment type="tissue specificity">
    <text evidence="5">Expressed and secreted by skin epithelium.</text>
</comment>
<comment type="PTM">
    <text evidence="1">Monoubiquitination of Lys-120 (H2AK119Ub) gives a specific tag for epigenetic transcriptional repression. Following DNA double-strand breaks (DSBs), it is ubiquitinated through 'Lys-63' linkage of ubiquitin moieties, leading to the recruitment of repair proteins to sites of DNA damage. H2AK119Ub and ionizing radiation-induced 'Lys-63'-linked ubiquitination are distinct events (By similarity).</text>
</comment>
<comment type="PTM">
    <text evidence="1">Phosphorylation on Ser-2 is enhanced during mitosis. Phosphorylation on Ser-2 directly represses transcription (By similarity).</text>
</comment>
<comment type="PTM">
    <text evidence="1">Glutamine methylation at Gln-105 (H2AQ104me) by FBL is specifically dedicated to polymerase I. It is present at 35S ribosomal DNA locus and impairs binding of the FACT complex (By similarity).</text>
</comment>
<comment type="mass spectrometry" mass="13639.0" method="MALDI" evidence="5"/>
<comment type="similarity">
    <text evidence="9">Belongs to the histone H2A family.</text>
</comment>
<comment type="sequence caution" evidence="9">
    <conflict type="miscellaneous discrepancy" ref="2"/>
    <text>Differs from that shown extensively.</text>
</comment>
<comment type="sequence caution" evidence="9">
    <conflict type="miscellaneous discrepancy" ref="3"/>
    <text>Differs from that shown extensively.</text>
</comment>
<protein>
    <recommendedName>
        <fullName>Histone H2A</fullName>
    </recommendedName>
</protein>
<accession>P02264</accession>
<accession>P83327</accession>
<organism>
    <name type="scientific">Oncorhynchus mykiss</name>
    <name type="common">Rainbow trout</name>
    <name type="synonym">Salmo gairdneri</name>
    <dbReference type="NCBI Taxonomy" id="8022"/>
    <lineage>
        <taxon>Eukaryota</taxon>
        <taxon>Metazoa</taxon>
        <taxon>Chordata</taxon>
        <taxon>Craniata</taxon>
        <taxon>Vertebrata</taxon>
        <taxon>Euteleostomi</taxon>
        <taxon>Actinopterygii</taxon>
        <taxon>Neopterygii</taxon>
        <taxon>Teleostei</taxon>
        <taxon>Protacanthopterygii</taxon>
        <taxon>Salmoniformes</taxon>
        <taxon>Salmonidae</taxon>
        <taxon>Salmoninae</taxon>
        <taxon>Oncorhynchus</taxon>
    </lineage>
</organism>
<keyword id="KW-0007">Acetylation</keyword>
<keyword id="KW-0044">Antibiotic</keyword>
<keyword id="KW-0929">Antimicrobial</keyword>
<keyword id="KW-0158">Chromosome</keyword>
<keyword id="KW-0903">Direct protein sequencing</keyword>
<keyword id="KW-0238">DNA-binding</keyword>
<keyword id="KW-0295">Fungicide</keyword>
<keyword id="KW-0379">Hydroxylation</keyword>
<keyword id="KW-1017">Isopeptide bond</keyword>
<keyword id="KW-0488">Methylation</keyword>
<keyword id="KW-0544">Nucleosome core</keyword>
<keyword id="KW-0539">Nucleus</keyword>
<keyword id="KW-0597">Phosphoprotein</keyword>
<keyword id="KW-0832">Ubl conjugation</keyword>
<dbReference type="EMBL" id="X01064">
    <property type="protein sequence ID" value="CAA25528.1"/>
    <property type="molecule type" value="Genomic_DNA"/>
</dbReference>
<dbReference type="PIR" id="A92959">
    <property type="entry name" value="HSTR21"/>
</dbReference>
<dbReference type="RefSeq" id="XP_021449894.2">
    <property type="nucleotide sequence ID" value="XM_021594219.2"/>
</dbReference>
<dbReference type="RefSeq" id="XP_036804271.1">
    <property type="nucleotide sequence ID" value="XM_036948376.1"/>
</dbReference>
<dbReference type="RefSeq" id="XP_036804273.1">
    <property type="nucleotide sequence ID" value="XM_036948378.1"/>
</dbReference>
<dbReference type="RefSeq" id="XP_036804276.1">
    <property type="nucleotide sequence ID" value="XM_036948381.1"/>
</dbReference>
<dbReference type="RefSeq" id="XP_036804279.1">
    <property type="nucleotide sequence ID" value="XM_036948384.1"/>
</dbReference>
<dbReference type="RefSeq" id="XP_036804282.1">
    <property type="nucleotide sequence ID" value="XM_036948387.1"/>
</dbReference>
<dbReference type="RefSeq" id="XP_036804291.1">
    <property type="nucleotide sequence ID" value="XM_036948396.1"/>
</dbReference>
<dbReference type="RefSeq" id="XP_036804293.1">
    <property type="nucleotide sequence ID" value="XM_036948398.1"/>
</dbReference>
<dbReference type="RefSeq" id="XP_036804295.1">
    <property type="nucleotide sequence ID" value="XM_036948400.1"/>
</dbReference>
<dbReference type="RefSeq" id="XP_036804297.1">
    <property type="nucleotide sequence ID" value="XM_036948402.1"/>
</dbReference>
<dbReference type="RefSeq" id="XP_036804299.1">
    <property type="nucleotide sequence ID" value="XM_036948404.1"/>
</dbReference>
<dbReference type="RefSeq" id="XP_036804301.1">
    <property type="nucleotide sequence ID" value="XM_036948406.1"/>
</dbReference>
<dbReference type="RefSeq" id="XP_036804305.1">
    <property type="nucleotide sequence ID" value="XM_036948410.1"/>
</dbReference>
<dbReference type="RefSeq" id="XP_036830034.1">
    <property type="nucleotide sequence ID" value="XM_036974139.1"/>
</dbReference>
<dbReference type="RefSeq" id="XP_036830035.1">
    <property type="nucleotide sequence ID" value="XM_036974140.1"/>
</dbReference>
<dbReference type="RefSeq" id="XP_036830039.1">
    <property type="nucleotide sequence ID" value="XM_036974144.1"/>
</dbReference>
<dbReference type="RefSeq" id="XP_036830040.1">
    <property type="nucleotide sequence ID" value="XM_036974145.1"/>
</dbReference>
<dbReference type="RefSeq" id="XP_036830046.1">
    <property type="nucleotide sequence ID" value="XM_036974151.1"/>
</dbReference>
<dbReference type="RefSeq" id="XP_036830047.1">
    <property type="nucleotide sequence ID" value="XM_036974152.1"/>
</dbReference>
<dbReference type="RefSeq" id="XP_036830048.1">
    <property type="nucleotide sequence ID" value="XM_036974153.1"/>
</dbReference>
<dbReference type="RefSeq" id="XP_036830053.1">
    <property type="nucleotide sequence ID" value="XM_036974158.1"/>
</dbReference>
<dbReference type="RefSeq" id="XP_036830054.1">
    <property type="nucleotide sequence ID" value="XM_036974159.1"/>
</dbReference>
<dbReference type="RefSeq" id="XP_036830058.1">
    <property type="nucleotide sequence ID" value="XM_036974163.1"/>
</dbReference>
<dbReference type="RefSeq" id="XP_036830063.1">
    <property type="nucleotide sequence ID" value="XM_036974168.1"/>
</dbReference>
<dbReference type="RefSeq" id="XP_036830073.1">
    <property type="nucleotide sequence ID" value="XM_036974178.1"/>
</dbReference>
<dbReference type="RefSeq" id="XP_036830074.1">
    <property type="nucleotide sequence ID" value="XM_036974179.1"/>
</dbReference>
<dbReference type="RefSeq" id="XP_036830081.1">
    <property type="nucleotide sequence ID" value="XM_036974186.1"/>
</dbReference>
<dbReference type="RefSeq" id="XP_036830084.1">
    <property type="nucleotide sequence ID" value="XM_036974189.1"/>
</dbReference>
<dbReference type="RefSeq" id="XP_036830089.1">
    <property type="nucleotide sequence ID" value="XM_036974194.1"/>
</dbReference>
<dbReference type="RefSeq" id="XP_036830094.1">
    <property type="nucleotide sequence ID" value="XM_036974199.1"/>
</dbReference>
<dbReference type="RefSeq" id="XP_036830095.1">
    <property type="nucleotide sequence ID" value="XM_036974200.1"/>
</dbReference>
<dbReference type="RefSeq" id="XP_036830099.1">
    <property type="nucleotide sequence ID" value="XM_036974204.1"/>
</dbReference>
<dbReference type="RefSeq" id="XP_036830135.1">
    <property type="nucleotide sequence ID" value="XM_036974240.1"/>
</dbReference>
<dbReference type="RefSeq" id="XP_036830137.1">
    <property type="nucleotide sequence ID" value="XM_036974242.1"/>
</dbReference>
<dbReference type="RefSeq" id="XP_036830141.1">
    <property type="nucleotide sequence ID" value="XM_036974246.1"/>
</dbReference>
<dbReference type="RefSeq" id="XP_036830149.1">
    <property type="nucleotide sequence ID" value="XM_036974254.1"/>
</dbReference>
<dbReference type="RefSeq" id="XP_036830150.1">
    <property type="nucleotide sequence ID" value="XM_036974255.1"/>
</dbReference>
<dbReference type="RefSeq" id="XP_036830157.1">
    <property type="nucleotide sequence ID" value="XM_036974262.1"/>
</dbReference>
<dbReference type="RefSeq" id="XP_036830158.1">
    <property type="nucleotide sequence ID" value="XM_036974263.1"/>
</dbReference>
<dbReference type="RefSeq" id="XP_036830163.1">
    <property type="nucleotide sequence ID" value="XM_036974268.1"/>
</dbReference>
<dbReference type="SMR" id="P02264"/>
<dbReference type="iPTMnet" id="P02264"/>
<dbReference type="Ensembl" id="ENSOMYT00000127112.1">
    <property type="protein sequence ID" value="ENSOMYP00000122407.1"/>
    <property type="gene ID" value="ENSOMYG00000047912.1"/>
</dbReference>
<dbReference type="GeneID" id="110514179"/>
<dbReference type="GeneID" id="110515258"/>
<dbReference type="GeneID" id="118940119"/>
<dbReference type="GeneID" id="118940121"/>
<dbReference type="GeneID" id="118940124"/>
<dbReference type="GeneID" id="118940126"/>
<dbReference type="GeneID" id="118940129"/>
<dbReference type="GeneID" id="118940133"/>
<dbReference type="GeneID" id="118940135"/>
<dbReference type="GeneID" id="118940137"/>
<dbReference type="GeneID" id="118940139"/>
<dbReference type="GeneID" id="118940141"/>
<dbReference type="GeneID" id="118940143"/>
<dbReference type="GeneID" id="118940146"/>
<dbReference type="GeneID" id="118956069"/>
<dbReference type="GeneID" id="118956073"/>
<dbReference type="GeneID" id="118956074"/>
<dbReference type="GeneID" id="118956080"/>
<dbReference type="GeneID" id="118956081"/>
<dbReference type="GeneID" id="118956082"/>
<dbReference type="GeneID" id="118956087"/>
<dbReference type="GeneID" id="118956088"/>
<dbReference type="GeneID" id="118956092"/>
<dbReference type="GeneID" id="118956097"/>
<dbReference type="GeneID" id="118956105"/>
<dbReference type="GeneID" id="118956106"/>
<dbReference type="GeneID" id="118956113"/>
<dbReference type="GeneID" id="118956116"/>
<dbReference type="GeneID" id="118956121"/>
<dbReference type="GeneID" id="118956127"/>
<dbReference type="GeneID" id="118956128"/>
<dbReference type="GeneID" id="118956133"/>
<dbReference type="GeneID" id="118956946"/>
<dbReference type="GeneID" id="118956948"/>
<dbReference type="GeneID" id="118956952"/>
<dbReference type="GeneID" id="118956961"/>
<dbReference type="GeneID" id="118956962"/>
<dbReference type="GeneID" id="118956968"/>
<dbReference type="GeneID" id="118956969"/>
<dbReference type="GeneID" id="118956974"/>
<dbReference type="GeneTree" id="ENSGT01020000230360"/>
<dbReference type="OrthoDB" id="10253031at2759"/>
<dbReference type="Proteomes" id="UP000694395">
    <property type="component" value="Chromosome 17"/>
</dbReference>
<dbReference type="GO" id="GO:0005615">
    <property type="term" value="C:extracellular space"/>
    <property type="evidence" value="ECO:0000314"/>
    <property type="project" value="AgBase"/>
</dbReference>
<dbReference type="GO" id="GO:0000786">
    <property type="term" value="C:nucleosome"/>
    <property type="evidence" value="ECO:0007669"/>
    <property type="project" value="UniProtKB-KW"/>
</dbReference>
<dbReference type="GO" id="GO:0005634">
    <property type="term" value="C:nucleus"/>
    <property type="evidence" value="ECO:0007669"/>
    <property type="project" value="UniProtKB-SubCell"/>
</dbReference>
<dbReference type="GO" id="GO:0003677">
    <property type="term" value="F:DNA binding"/>
    <property type="evidence" value="ECO:0007669"/>
    <property type="project" value="UniProtKB-KW"/>
</dbReference>
<dbReference type="GO" id="GO:0046982">
    <property type="term" value="F:protein heterodimerization activity"/>
    <property type="evidence" value="ECO:0007669"/>
    <property type="project" value="InterPro"/>
</dbReference>
<dbReference type="GO" id="GO:0030527">
    <property type="term" value="F:structural constituent of chromatin"/>
    <property type="evidence" value="ECO:0007669"/>
    <property type="project" value="InterPro"/>
</dbReference>
<dbReference type="GO" id="GO:0050832">
    <property type="term" value="P:defense response to fungus"/>
    <property type="evidence" value="ECO:0007669"/>
    <property type="project" value="UniProtKB-KW"/>
</dbReference>
<dbReference type="GO" id="GO:0050830">
    <property type="term" value="P:defense response to Gram-positive bacterium"/>
    <property type="evidence" value="ECO:0000314"/>
    <property type="project" value="AgBase"/>
</dbReference>
<dbReference type="GO" id="GO:0051673">
    <property type="term" value="P:disruption of plasma membrane integrity in another organism"/>
    <property type="evidence" value="ECO:0000314"/>
    <property type="project" value="AgBase"/>
</dbReference>
<dbReference type="GO" id="GO:0045087">
    <property type="term" value="P:innate immune response"/>
    <property type="evidence" value="ECO:0000314"/>
    <property type="project" value="AgBase"/>
</dbReference>
<dbReference type="GO" id="GO:0031640">
    <property type="term" value="P:killing of cells of another organism"/>
    <property type="evidence" value="ECO:0007669"/>
    <property type="project" value="UniProtKB-KW"/>
</dbReference>
<dbReference type="CDD" id="cd00074">
    <property type="entry name" value="HFD_H2A"/>
    <property type="match status" value="1"/>
</dbReference>
<dbReference type="FunFam" id="1.10.20.10:FF:000004">
    <property type="entry name" value="Histone H2A"/>
    <property type="match status" value="1"/>
</dbReference>
<dbReference type="Gene3D" id="1.10.20.10">
    <property type="entry name" value="Histone, subunit A"/>
    <property type="match status" value="1"/>
</dbReference>
<dbReference type="InterPro" id="IPR009072">
    <property type="entry name" value="Histone-fold"/>
</dbReference>
<dbReference type="InterPro" id="IPR002119">
    <property type="entry name" value="Histone_H2A"/>
</dbReference>
<dbReference type="InterPro" id="IPR007125">
    <property type="entry name" value="Histone_H2A/H2B/H3"/>
</dbReference>
<dbReference type="InterPro" id="IPR032454">
    <property type="entry name" value="Histone_H2A_C"/>
</dbReference>
<dbReference type="InterPro" id="IPR032458">
    <property type="entry name" value="Histone_H2A_CS"/>
</dbReference>
<dbReference type="PANTHER" id="PTHR23430">
    <property type="entry name" value="HISTONE H2A"/>
    <property type="match status" value="1"/>
</dbReference>
<dbReference type="Pfam" id="PF00125">
    <property type="entry name" value="Histone"/>
    <property type="match status" value="1"/>
</dbReference>
<dbReference type="Pfam" id="PF16211">
    <property type="entry name" value="Histone_H2A_C"/>
    <property type="match status" value="1"/>
</dbReference>
<dbReference type="PRINTS" id="PR00620">
    <property type="entry name" value="HISTONEH2A"/>
</dbReference>
<dbReference type="SMART" id="SM00414">
    <property type="entry name" value="H2A"/>
    <property type="match status" value="1"/>
</dbReference>
<dbReference type="SUPFAM" id="SSF47113">
    <property type="entry name" value="Histone-fold"/>
    <property type="match status" value="1"/>
</dbReference>
<dbReference type="PROSITE" id="PS00046">
    <property type="entry name" value="HISTONE_H2A"/>
    <property type="match status" value="1"/>
</dbReference>
<evidence type="ECO:0000250" key="1"/>
<evidence type="ECO:0000250" key="2">
    <source>
        <dbReference type="UniProtKB" id="P0C0S5"/>
    </source>
</evidence>
<evidence type="ECO:0000250" key="3">
    <source>
        <dbReference type="UniProtKB" id="P0C0S8"/>
    </source>
</evidence>
<evidence type="ECO:0000256" key="4">
    <source>
        <dbReference type="SAM" id="MobiDB-lite"/>
    </source>
</evidence>
<evidence type="ECO:0000269" key="5">
    <source>
    </source>
</evidence>
<evidence type="ECO:0000269" key="6">
    <source>
    </source>
</evidence>
<evidence type="ECO:0000269" key="7">
    <source>
    </source>
</evidence>
<evidence type="ECO:0000269" key="8">
    <source>
    </source>
</evidence>
<evidence type="ECO:0000305" key="9"/>
<evidence type="ECO:0000305" key="10">
    <source>
    </source>
</evidence>
<feature type="initiator methionine" description="Removed" evidence="5 7 8">
    <location>
        <position position="1"/>
    </location>
</feature>
<feature type="chain" id="PRO_0000055277" description="Histone H2A">
    <location>
        <begin position="2"/>
        <end position="128"/>
    </location>
</feature>
<feature type="region of interest" description="Disordered" evidence="4">
    <location>
        <begin position="1"/>
        <end position="22"/>
    </location>
</feature>
<feature type="compositionally biased region" description="Basic residues" evidence="4">
    <location>
        <begin position="7"/>
        <end position="19"/>
    </location>
</feature>
<feature type="modified residue" description="N-acetylserine" evidence="5">
    <location>
        <position position="2"/>
    </location>
</feature>
<feature type="modified residue" description="Phosphoserine" evidence="10">
    <location>
        <position position="2"/>
    </location>
</feature>
<feature type="modified residue" description="N6-(2-hydroxyisobutyryl)lysine" evidence="3">
    <location>
        <position position="6"/>
    </location>
</feature>
<feature type="modified residue" description="N6-acetyllysine" evidence="8">
    <location>
        <position position="6"/>
    </location>
</feature>
<feature type="modified residue" description="N6-(2-hydroxyisobutyryl)lysine; alternate" evidence="3">
    <location>
        <position position="10"/>
    </location>
</feature>
<feature type="modified residue" description="N6-lactoyllysine; alternate" evidence="2">
    <location>
        <position position="10"/>
    </location>
</feature>
<feature type="modified residue" description="N6-succinyllysine" evidence="3">
    <location>
        <position position="10"/>
    </location>
</feature>
<feature type="modified residue" description="N6-(2-hydroxyisobutyryl)lysine; alternate" evidence="3">
    <location>
        <position position="37"/>
    </location>
</feature>
<feature type="modified residue" description="N6-(2-hydroxyisobutyryl)lysine" evidence="3">
    <location>
        <position position="75"/>
    </location>
</feature>
<feature type="modified residue" description="N6-(2-hydroxyisobutyryl)lysine" evidence="3">
    <location>
        <position position="76"/>
    </location>
</feature>
<feature type="modified residue" description="N6-(2-hydroxyisobutyryl)lysine; alternate" evidence="3">
    <location>
        <position position="96"/>
    </location>
</feature>
<feature type="modified residue" description="N6-glutaryllysine; alternate" evidence="3">
    <location>
        <position position="96"/>
    </location>
</feature>
<feature type="modified residue" description="N6-succinyllysine" evidence="3">
    <location>
        <position position="96"/>
    </location>
</feature>
<feature type="modified residue" description="N5-methylglutamine" evidence="1">
    <location>
        <position position="105"/>
    </location>
</feature>
<feature type="modified residue" description="N6-(2-hydroxyisobutyryl)lysine; alternate" evidence="3">
    <location>
        <position position="119"/>
    </location>
</feature>
<feature type="modified residue" description="N6-glutaryllysine; alternate" evidence="3">
    <location>
        <position position="119"/>
    </location>
</feature>
<feature type="modified residue" description="N6-glutaryllysine; alternate" evidence="3">
    <location>
        <position position="120"/>
    </location>
</feature>
<feature type="modified residue" description="N6-glutaryllysine; alternate" evidence="3">
    <location>
        <position position="126"/>
    </location>
</feature>
<feature type="cross-link" description="Glycyl lysine isopeptide (Lys-Gly) (interchain with G-Cter in ubiquitin)" evidence="1">
    <location>
        <position position="14"/>
    </location>
</feature>
<feature type="cross-link" description="Glycyl lysine isopeptide (Lys-Gly) (interchain with G-Cter in ubiquitin)" evidence="1">
    <location>
        <position position="16"/>
    </location>
</feature>
<feature type="cross-link" description="Glycyl lysine isopeptide (Lys-Gly) (interchain with G-Cter in ubiquitin)" evidence="6">
    <location>
        <position position="120"/>
    </location>
</feature>
<reference key="1">
    <citation type="journal article" date="1984" name="J. Mol. Evol.">
        <title>Organization and nucleotide sequence of rainbow trout histone H2A and H3 genes.</title>
        <authorList>
            <person name="Connor W."/>
            <person name="States J.C."/>
            <person name="Mezquita J."/>
            <person name="Dixon G.H."/>
        </authorList>
    </citation>
    <scope>NUCLEOTIDE SEQUENCE [GENOMIC DNA]</scope>
</reference>
<reference key="2">
    <citation type="journal article" date="1973" name="J. Biol. Chem.">
        <title>Histone IIb1 from rainbow trout. Comparison in amino acid sequence with calf thymus IIB1.</title>
        <authorList>
            <person name="Bailey G.S."/>
            <person name="Dixon G.H."/>
        </authorList>
    </citation>
    <scope>PROTEIN SEQUENCE OF 2-128</scope>
</reference>
<reference key="3">
    <citation type="journal article" date="1972" name="J. Biol. Chem.">
        <title>Acetylation of trout testis histones in vivo. Site of the modification in histone IIb 1.</title>
        <authorList>
            <person name="Candido E.P.M."/>
            <person name="Dixon G.H."/>
        </authorList>
    </citation>
    <scope>PROTEIN SEQUENCE OF 2-18</scope>
    <scope>PHOSPHORYLATION AT SER-2</scope>
    <scope>ACETYLATION AT LYS-6</scope>
</reference>
<reference key="4">
    <citation type="journal article" date="2002" name="Biochem. J.">
        <title>Anti-microbial properties of histone H2A from skin secretions of rainbow trout, Oncorhynchus mykiss.</title>
        <authorList>
            <person name="Fernandes J.M.O."/>
            <person name="Kemp G.D."/>
            <person name="Molle M.G."/>
            <person name="Smith V.J."/>
        </authorList>
    </citation>
    <scope>PROTEIN SEQUENCE OF 41-52</scope>
    <scope>ACETYLATION AT SER-2</scope>
    <scope>FUNCTION</scope>
    <scope>TISSUE SPECIFICITY</scope>
    <scope>MASS SPECTROMETRY</scope>
    <source>
        <tissue>Skin mucus</tissue>
    </source>
</reference>
<reference key="5">
    <citation type="journal article" date="1989" name="Biochemistry">
        <title>Structure of polyubiquitinated histone H2A.</title>
        <authorList>
            <person name="Nickel B.E."/>
            <person name="Davie J.R."/>
        </authorList>
    </citation>
    <scope>UBIQUITINATION AT LYS-120</scope>
</reference>
<proteinExistence type="evidence at protein level"/>
<name>H2A_ONCMY</name>